<organism>
    <name type="scientific">Staphylococcus aureus (strain Newman)</name>
    <dbReference type="NCBI Taxonomy" id="426430"/>
    <lineage>
        <taxon>Bacteria</taxon>
        <taxon>Bacillati</taxon>
        <taxon>Bacillota</taxon>
        <taxon>Bacilli</taxon>
        <taxon>Bacillales</taxon>
        <taxon>Staphylococcaceae</taxon>
        <taxon>Staphylococcus</taxon>
    </lineage>
</organism>
<reference key="1">
    <citation type="submission" date="2000-12" db="EMBL/GenBank/DDBJ databases">
        <title>The sigH locus of Staphylococcus aureus involved in methicillin resistance.</title>
        <authorList>
            <person name="Bischoff M."/>
        </authorList>
    </citation>
    <scope>NUCLEOTIDE SEQUENCE [GENOMIC DNA]</scope>
</reference>
<reference key="2">
    <citation type="journal article" date="2008" name="J. Bacteriol.">
        <title>Genome sequence of Staphylococcus aureus strain Newman and comparative analysis of staphylococcal genomes: polymorphism and evolution of two major pathogenicity islands.</title>
        <authorList>
            <person name="Baba T."/>
            <person name="Bae T."/>
            <person name="Schneewind O."/>
            <person name="Takeuchi F."/>
            <person name="Hiramatsu K."/>
        </authorList>
    </citation>
    <scope>NUCLEOTIDE SEQUENCE [LARGE SCALE GENOMIC DNA]</scope>
    <source>
        <strain>Newman</strain>
    </source>
</reference>
<gene>
    <name evidence="1" type="primary">rpmG1</name>
    <name type="synonym">rpmG</name>
    <name type="ordered locus">NWMN_0496.1</name>
</gene>
<proteinExistence type="inferred from homology"/>
<feature type="chain" id="PRO_0000170225" description="Large ribosomal subunit protein bL33A">
    <location>
        <begin position="1"/>
        <end position="47"/>
    </location>
</feature>
<evidence type="ECO:0000255" key="1">
    <source>
        <dbReference type="HAMAP-Rule" id="MF_00294"/>
    </source>
</evidence>
<sequence length="47" mass="5375">MRKIPLNCEACGNRNYNVPKQEGSATRLTLKKYCPKCNAHTIHKESK</sequence>
<comment type="similarity">
    <text evidence="1">Belongs to the bacterial ribosomal protein bL33 family.</text>
</comment>
<protein>
    <recommendedName>
        <fullName evidence="1">Large ribosomal subunit protein bL33A</fullName>
    </recommendedName>
    <alternativeName>
        <fullName evidence="1">50S ribosomal protein L33 1</fullName>
    </alternativeName>
</protein>
<dbReference type="EMBL" id="AF327733">
    <property type="protein sequence ID" value="AAK15308.1"/>
    <property type="molecule type" value="Genomic_DNA"/>
</dbReference>
<dbReference type="EMBL" id="AP009351">
    <property type="status" value="NOT_ANNOTATED_CDS"/>
    <property type="molecule type" value="Genomic_DNA"/>
</dbReference>
<dbReference type="RefSeq" id="WP_001788193.1">
    <property type="nucleotide sequence ID" value="NZ_JBBIAE010000002.1"/>
</dbReference>
<dbReference type="SMR" id="Q9AGS7"/>
<dbReference type="Proteomes" id="UP000006386">
    <property type="component" value="Chromosome"/>
</dbReference>
<dbReference type="GO" id="GO:0005737">
    <property type="term" value="C:cytoplasm"/>
    <property type="evidence" value="ECO:0007669"/>
    <property type="project" value="UniProtKB-ARBA"/>
</dbReference>
<dbReference type="GO" id="GO:1990904">
    <property type="term" value="C:ribonucleoprotein complex"/>
    <property type="evidence" value="ECO:0007669"/>
    <property type="project" value="UniProtKB-KW"/>
</dbReference>
<dbReference type="GO" id="GO:0005840">
    <property type="term" value="C:ribosome"/>
    <property type="evidence" value="ECO:0007669"/>
    <property type="project" value="UniProtKB-KW"/>
</dbReference>
<dbReference type="GO" id="GO:0003735">
    <property type="term" value="F:structural constituent of ribosome"/>
    <property type="evidence" value="ECO:0007669"/>
    <property type="project" value="InterPro"/>
</dbReference>
<dbReference type="GO" id="GO:0006412">
    <property type="term" value="P:translation"/>
    <property type="evidence" value="ECO:0007669"/>
    <property type="project" value="UniProtKB-UniRule"/>
</dbReference>
<dbReference type="Gene3D" id="2.20.28.120">
    <property type="entry name" value="Ribosomal protein L33"/>
    <property type="match status" value="1"/>
</dbReference>
<dbReference type="HAMAP" id="MF_00294">
    <property type="entry name" value="Ribosomal_bL33"/>
    <property type="match status" value="1"/>
</dbReference>
<dbReference type="InterPro" id="IPR001705">
    <property type="entry name" value="Ribosomal_bL33"/>
</dbReference>
<dbReference type="InterPro" id="IPR018264">
    <property type="entry name" value="Ribosomal_bL33_CS"/>
</dbReference>
<dbReference type="InterPro" id="IPR038584">
    <property type="entry name" value="Ribosomal_bL33_sf"/>
</dbReference>
<dbReference type="InterPro" id="IPR011332">
    <property type="entry name" value="Ribosomal_zn-bd"/>
</dbReference>
<dbReference type="NCBIfam" id="NF001764">
    <property type="entry name" value="PRK00504.1"/>
    <property type="match status" value="1"/>
</dbReference>
<dbReference type="NCBIfam" id="TIGR01023">
    <property type="entry name" value="rpmG_bact"/>
    <property type="match status" value="1"/>
</dbReference>
<dbReference type="Pfam" id="PF00471">
    <property type="entry name" value="Ribosomal_L33"/>
    <property type="match status" value="1"/>
</dbReference>
<dbReference type="SUPFAM" id="SSF57829">
    <property type="entry name" value="Zn-binding ribosomal proteins"/>
    <property type="match status" value="1"/>
</dbReference>
<dbReference type="PROSITE" id="PS00582">
    <property type="entry name" value="RIBOSOMAL_L33"/>
    <property type="match status" value="1"/>
</dbReference>
<keyword id="KW-0687">Ribonucleoprotein</keyword>
<keyword id="KW-0689">Ribosomal protein</keyword>
<name>RL331_STAAE</name>
<accession>Q9AGS7</accession>